<accession>Q96IR3</accession>
<reference key="1">
    <citation type="journal article" date="2004" name="Genome Res.">
        <title>The status, quality, and expansion of the NIH full-length cDNA project: the Mammalian Gene Collection (MGC).</title>
        <authorList>
            <consortium name="The MGC Project Team"/>
        </authorList>
    </citation>
    <scope>NUCLEOTIDE SEQUENCE [LARGE SCALE MRNA]</scope>
    <source>
        <tissue>Eye</tissue>
    </source>
</reference>
<proteinExistence type="uncertain"/>
<comment type="caution">
    <text evidence="2">Product of a dubious gene prediction. Encoded in intron of the PATZ1 gene.</text>
</comment>
<protein>
    <recommendedName>
        <fullName>Putative uncharacterized protein MGC15705</fullName>
    </recommendedName>
</protein>
<keyword id="KW-1185">Reference proteome</keyword>
<dbReference type="EMBL" id="BC007304">
    <property type="protein sequence ID" value="AAH07304.1"/>
    <property type="molecule type" value="mRNA"/>
</dbReference>
<dbReference type="BioMuta" id="-"/>
<dbReference type="neXtProt" id="NX_Q96IR3"/>
<dbReference type="InParanoid" id="Q96IR3"/>
<dbReference type="PAN-GO" id="Q96IR3">
    <property type="GO annotations" value="0 GO annotations based on evolutionary models"/>
</dbReference>
<dbReference type="Pharos" id="Q96IR3">
    <property type="development level" value="Tdark"/>
</dbReference>
<dbReference type="Proteomes" id="UP000005640">
    <property type="component" value="Unplaced"/>
</dbReference>
<evidence type="ECO:0000256" key="1">
    <source>
        <dbReference type="SAM" id="MobiDB-lite"/>
    </source>
</evidence>
<evidence type="ECO:0000305" key="2"/>
<feature type="chain" id="PRO_0000254540" description="Putative uncharacterized protein MGC15705">
    <location>
        <begin position="1"/>
        <end position="41"/>
    </location>
</feature>
<feature type="region of interest" description="Disordered" evidence="1">
    <location>
        <begin position="1"/>
        <end position="23"/>
    </location>
</feature>
<feature type="compositionally biased region" description="Basic and acidic residues" evidence="1">
    <location>
        <begin position="1"/>
        <end position="12"/>
    </location>
</feature>
<sequence length="41" mass="4679">MTRNVVRQEFEAPGKPQDSSQQDACLILVKGNWTTNEMEVK</sequence>
<name>YV007_HUMAN</name>
<organism>
    <name type="scientific">Homo sapiens</name>
    <name type="common">Human</name>
    <dbReference type="NCBI Taxonomy" id="9606"/>
    <lineage>
        <taxon>Eukaryota</taxon>
        <taxon>Metazoa</taxon>
        <taxon>Chordata</taxon>
        <taxon>Craniata</taxon>
        <taxon>Vertebrata</taxon>
        <taxon>Euteleostomi</taxon>
        <taxon>Mammalia</taxon>
        <taxon>Eutheria</taxon>
        <taxon>Euarchontoglires</taxon>
        <taxon>Primates</taxon>
        <taxon>Haplorrhini</taxon>
        <taxon>Catarrhini</taxon>
        <taxon>Hominidae</taxon>
        <taxon>Homo</taxon>
    </lineage>
</organism>